<comment type="function">
    <text evidence="1">Gustducin-coupled receptor implicated in the perception of bitter compounds in the oral cavity and the gastrointestinal tract. Signals through PLCB2 and the calcium-regulated cation channel TRPM5 (By similarity).</text>
</comment>
<comment type="subcellular location">
    <subcellularLocation>
        <location>Membrane</location>
        <topology>Multi-pass membrane protein</topology>
    </subcellularLocation>
</comment>
<comment type="miscellaneous">
    <text>Several bitter taste receptors are expressed in a single taste receptor cell.</text>
</comment>
<comment type="similarity">
    <text evidence="3">Belongs to the G-protein coupled receptor T2R family.</text>
</comment>
<dbReference type="EMBL" id="AY724836">
    <property type="protein sequence ID" value="AAU21071.1"/>
    <property type="molecule type" value="Genomic_DNA"/>
</dbReference>
<dbReference type="GlyCosmos" id="Q646E8">
    <property type="glycosylation" value="1 site, No reported glycans"/>
</dbReference>
<dbReference type="GO" id="GO:0005886">
    <property type="term" value="C:plasma membrane"/>
    <property type="evidence" value="ECO:0007669"/>
    <property type="project" value="UniProtKB-ARBA"/>
</dbReference>
<dbReference type="GO" id="GO:0033038">
    <property type="term" value="F:bitter taste receptor activity"/>
    <property type="evidence" value="ECO:0007669"/>
    <property type="project" value="InterPro"/>
</dbReference>
<dbReference type="GO" id="GO:0004930">
    <property type="term" value="F:G protein-coupled receptor activity"/>
    <property type="evidence" value="ECO:0007669"/>
    <property type="project" value="UniProtKB-KW"/>
</dbReference>
<dbReference type="CDD" id="cd15020">
    <property type="entry name" value="7tm_TAS2R3"/>
    <property type="match status" value="1"/>
</dbReference>
<dbReference type="FunFam" id="1.20.1070.10:FF:000042">
    <property type="entry name" value="Taste receptor type 2 member 7"/>
    <property type="match status" value="1"/>
</dbReference>
<dbReference type="Gene3D" id="1.20.1070.10">
    <property type="entry name" value="Rhodopsin 7-helix transmembrane proteins"/>
    <property type="match status" value="1"/>
</dbReference>
<dbReference type="InterPro" id="IPR017452">
    <property type="entry name" value="GPCR_Rhodpsn_7TM"/>
</dbReference>
<dbReference type="InterPro" id="IPR007960">
    <property type="entry name" value="TAS2R"/>
</dbReference>
<dbReference type="PANTHER" id="PTHR11394">
    <property type="entry name" value="TASTE RECEPTOR TYPE 2"/>
    <property type="match status" value="1"/>
</dbReference>
<dbReference type="PANTHER" id="PTHR11394:SF49">
    <property type="entry name" value="TASTE RECEPTOR TYPE 2 MEMBER 3"/>
    <property type="match status" value="1"/>
</dbReference>
<dbReference type="Pfam" id="PF05296">
    <property type="entry name" value="TAS2R"/>
    <property type="match status" value="1"/>
</dbReference>
<dbReference type="SUPFAM" id="SSF81321">
    <property type="entry name" value="Family A G protein-coupled receptor-like"/>
    <property type="match status" value="1"/>
</dbReference>
<dbReference type="PROSITE" id="PS50262">
    <property type="entry name" value="G_PROTEIN_RECEP_F1_2"/>
    <property type="match status" value="1"/>
</dbReference>
<organism>
    <name type="scientific">Papio hamadryas</name>
    <name type="common">Hamadryas baboon</name>
    <dbReference type="NCBI Taxonomy" id="9557"/>
    <lineage>
        <taxon>Eukaryota</taxon>
        <taxon>Metazoa</taxon>
        <taxon>Chordata</taxon>
        <taxon>Craniata</taxon>
        <taxon>Vertebrata</taxon>
        <taxon>Euteleostomi</taxon>
        <taxon>Mammalia</taxon>
        <taxon>Eutheria</taxon>
        <taxon>Euarchontoglires</taxon>
        <taxon>Primates</taxon>
        <taxon>Haplorrhini</taxon>
        <taxon>Catarrhini</taxon>
        <taxon>Cercopithecidae</taxon>
        <taxon>Cercopithecinae</taxon>
        <taxon>Papio</taxon>
    </lineage>
</organism>
<proteinExistence type="inferred from homology"/>
<evidence type="ECO:0000250" key="1"/>
<evidence type="ECO:0000255" key="2"/>
<evidence type="ECO:0000305" key="3"/>
<reference key="1">
    <citation type="journal article" date="2005" name="Mol. Biol. Evol.">
        <title>Evolution of bitter taste receptors in humans and apes.</title>
        <authorList>
            <person name="Fischer A."/>
            <person name="Gilad Y."/>
            <person name="Man O."/>
            <person name="Paeaebo S."/>
        </authorList>
    </citation>
    <scope>NUCLEOTIDE SEQUENCE [GENOMIC DNA]</scope>
</reference>
<name>TA2R3_PAPHA</name>
<sequence length="315" mass="35829">MGLTDGVFLIVCGAQFTLGILXNGFIGLVNGRSWFKTKRMSLSDFIIATLALSRIILLCIILTDSFLIVFSVKEHDSGIIMQLIDVFWTFTNHLSIWFATCLGVLYCLKIASFSHPTFLWLKWRVSRVMVWMLLGALLLSCGSTASLINEFKLYSVLRGIEATRNVTEHFRKKRNEYYLIHVLGTLWYLPPLVVSLASYFLLIFSLGRHTRQMLQNSTSSRDPSTEAHKRAIRIILSFFFLFLLYFLAFLIASFGNFLPETKMAKMIGEVMTMFYPAGHSFIVILGNSKLKQTFVEMLRCESGHLKPGSKGPIFS</sequence>
<feature type="chain" id="PRO_0000082200" description="Taste receptor type 2 member 3">
    <location>
        <begin position="1"/>
        <end position="315"/>
    </location>
</feature>
<feature type="topological domain" description="Extracellular" evidence="2">
    <location>
        <begin position="1"/>
        <end position="5"/>
    </location>
</feature>
<feature type="transmembrane region" description="Helical; Name=1" evidence="2">
    <location>
        <begin position="6"/>
        <end position="26"/>
    </location>
</feature>
<feature type="topological domain" description="Cytoplasmic" evidence="2">
    <location>
        <begin position="27"/>
        <end position="41"/>
    </location>
</feature>
<feature type="transmembrane region" description="Helical; Name=2" evidence="2">
    <location>
        <begin position="42"/>
        <end position="62"/>
    </location>
</feature>
<feature type="topological domain" description="Extracellular" evidence="2">
    <location>
        <begin position="63"/>
        <end position="93"/>
    </location>
</feature>
<feature type="transmembrane region" description="Helical; Name=3" evidence="2">
    <location>
        <begin position="94"/>
        <end position="114"/>
    </location>
</feature>
<feature type="topological domain" description="Cytoplasmic" evidence="2">
    <location>
        <begin position="115"/>
        <end position="127"/>
    </location>
</feature>
<feature type="transmembrane region" description="Helical; Name=4" evidence="2">
    <location>
        <begin position="128"/>
        <end position="148"/>
    </location>
</feature>
<feature type="topological domain" description="Extracellular" evidence="2">
    <location>
        <begin position="149"/>
        <end position="185"/>
    </location>
</feature>
<feature type="transmembrane region" description="Helical; Name=5" evidence="2">
    <location>
        <begin position="186"/>
        <end position="206"/>
    </location>
</feature>
<feature type="topological domain" description="Cytoplasmic" evidence="2">
    <location>
        <begin position="207"/>
        <end position="233"/>
    </location>
</feature>
<feature type="transmembrane region" description="Helical; Name=6" evidence="2">
    <location>
        <begin position="234"/>
        <end position="254"/>
    </location>
</feature>
<feature type="topological domain" description="Extracellular" evidence="2">
    <location>
        <begin position="255"/>
        <end position="265"/>
    </location>
</feature>
<feature type="transmembrane region" description="Helical; Name=7" evidence="2">
    <location>
        <begin position="266"/>
        <end position="286"/>
    </location>
</feature>
<feature type="topological domain" description="Cytoplasmic" evidence="2">
    <location>
        <begin position="287"/>
        <end position="315"/>
    </location>
</feature>
<feature type="glycosylation site" description="N-linked (GlcNAc...) asparagine" evidence="2">
    <location>
        <position position="165"/>
    </location>
</feature>
<gene>
    <name type="primary">TAS2R3</name>
</gene>
<protein>
    <recommendedName>
        <fullName>Taste receptor type 2 member 3</fullName>
        <shortName>T2R3</shortName>
    </recommendedName>
</protein>
<accession>Q646E8</accession>
<keyword id="KW-0297">G-protein coupled receptor</keyword>
<keyword id="KW-0325">Glycoprotein</keyword>
<keyword id="KW-0472">Membrane</keyword>
<keyword id="KW-0675">Receptor</keyword>
<keyword id="KW-0716">Sensory transduction</keyword>
<keyword id="KW-0919">Taste</keyword>
<keyword id="KW-0807">Transducer</keyword>
<keyword id="KW-0812">Transmembrane</keyword>
<keyword id="KW-1133">Transmembrane helix</keyword>